<sequence>MNHIETRLPLPIQPIDRWLRPFARFLHIEATSGLVLILCTVVALVAANSSWADSYLAFWHTDLTIAVGDIVFHHSLHHVINDGLMAVFFFVIGLEVKRELAHGSLSDLKQATLPIAAAIGGMIVPATLYLSMQYGQPGVQGWGIPMATDIAFVVGCLAILGSRVPHSLRVLLLSLAIVDDIGAILVIAIGYTESLDGRYLFLAAVAVGAVHFLSRIGVRRFPPYVIVGVLAWIALHESGIHATLIGVILGLMTPATPTLVPERFREYLHEKEHEFQPKEWSRRLHRAEVVREVQQLTRETVSPLEYLEVTLHPWTAYVIMPVFALANAGVLIEPANLSDSVAIAVVIGLVVGKPLGIALFSWLVIRLGVARLPSGLNWPILMSGSFLAGIGFTMALFIDGLAFGADGLDTAKTGVLVGSAISAIAGMGLLLWTLPKPTRQ</sequence>
<evidence type="ECO:0000255" key="1">
    <source>
        <dbReference type="HAMAP-Rule" id="MF_01844"/>
    </source>
</evidence>
<organism>
    <name type="scientific">Rhodopirellula baltica (strain DSM 10527 / NCIMB 13988 / SH1)</name>
    <dbReference type="NCBI Taxonomy" id="243090"/>
    <lineage>
        <taxon>Bacteria</taxon>
        <taxon>Pseudomonadati</taxon>
        <taxon>Planctomycetota</taxon>
        <taxon>Planctomycetia</taxon>
        <taxon>Pirellulales</taxon>
        <taxon>Pirellulaceae</taxon>
        <taxon>Rhodopirellula</taxon>
    </lineage>
</organism>
<protein>
    <recommendedName>
        <fullName evidence="1">Na(+)/H(+) antiporter NhaA</fullName>
    </recommendedName>
    <alternativeName>
        <fullName evidence="1">Sodium/proton antiporter NhaA</fullName>
    </alternativeName>
</protein>
<comment type="function">
    <text evidence="1">Na(+)/H(+) antiporter that extrudes sodium in exchange for external protons.</text>
</comment>
<comment type="catalytic activity">
    <reaction evidence="1">
        <text>Na(+)(in) + 2 H(+)(out) = Na(+)(out) + 2 H(+)(in)</text>
        <dbReference type="Rhea" id="RHEA:29251"/>
        <dbReference type="ChEBI" id="CHEBI:15378"/>
        <dbReference type="ChEBI" id="CHEBI:29101"/>
    </reaction>
    <physiologicalReaction direction="left-to-right" evidence="1">
        <dbReference type="Rhea" id="RHEA:29252"/>
    </physiologicalReaction>
</comment>
<comment type="subcellular location">
    <subcellularLocation>
        <location evidence="1">Cell inner membrane</location>
        <topology evidence="1">Multi-pass membrane protein</topology>
    </subcellularLocation>
</comment>
<comment type="similarity">
    <text evidence="1">Belongs to the NhaA Na(+)/H(+) (TC 2.A.33) antiporter family.</text>
</comment>
<name>NHAA_RHOBA</name>
<proteinExistence type="inferred from homology"/>
<dbReference type="EMBL" id="BX294139">
    <property type="protein sequence ID" value="CAD73301.1"/>
    <property type="molecule type" value="Genomic_DNA"/>
</dbReference>
<dbReference type="RefSeq" id="NP_865617.1">
    <property type="nucleotide sequence ID" value="NC_005027.1"/>
</dbReference>
<dbReference type="RefSeq" id="WP_011119453.1">
    <property type="nucleotide sequence ID" value="NC_005027.1"/>
</dbReference>
<dbReference type="SMR" id="Q7UTY3"/>
<dbReference type="FunCoup" id="Q7UTY3">
    <property type="interactions" value="76"/>
</dbReference>
<dbReference type="STRING" id="243090.RB3622"/>
<dbReference type="EnsemblBacteria" id="CAD73301">
    <property type="protein sequence ID" value="CAD73301"/>
    <property type="gene ID" value="RB3622"/>
</dbReference>
<dbReference type="KEGG" id="rba:RB3622"/>
<dbReference type="PATRIC" id="fig|243090.15.peg.1681"/>
<dbReference type="eggNOG" id="COG3004">
    <property type="taxonomic scope" value="Bacteria"/>
</dbReference>
<dbReference type="HOGENOM" id="CLU_015803_1_2_0"/>
<dbReference type="InParanoid" id="Q7UTY3"/>
<dbReference type="OrthoDB" id="9808135at2"/>
<dbReference type="Proteomes" id="UP000001025">
    <property type="component" value="Chromosome"/>
</dbReference>
<dbReference type="GO" id="GO:0005886">
    <property type="term" value="C:plasma membrane"/>
    <property type="evidence" value="ECO:0000318"/>
    <property type="project" value="GO_Central"/>
</dbReference>
<dbReference type="GO" id="GO:0015385">
    <property type="term" value="F:sodium:proton antiporter activity"/>
    <property type="evidence" value="ECO:0000318"/>
    <property type="project" value="GO_Central"/>
</dbReference>
<dbReference type="GO" id="GO:0006885">
    <property type="term" value="P:regulation of pH"/>
    <property type="evidence" value="ECO:0007669"/>
    <property type="project" value="InterPro"/>
</dbReference>
<dbReference type="Gene3D" id="1.20.1530.10">
    <property type="entry name" value="Na+/H+ antiporter like domain"/>
    <property type="match status" value="1"/>
</dbReference>
<dbReference type="HAMAP" id="MF_01844">
    <property type="entry name" value="NhaA"/>
    <property type="match status" value="1"/>
</dbReference>
<dbReference type="InterPro" id="IPR023171">
    <property type="entry name" value="Na/H_antiporter_dom_sf"/>
</dbReference>
<dbReference type="InterPro" id="IPR004670">
    <property type="entry name" value="NhaA"/>
</dbReference>
<dbReference type="NCBIfam" id="TIGR00773">
    <property type="entry name" value="NhaA"/>
    <property type="match status" value="1"/>
</dbReference>
<dbReference type="PANTHER" id="PTHR30341:SF0">
    <property type="entry name" value="NA(+)_H(+) ANTIPORTER NHAA"/>
    <property type="match status" value="1"/>
</dbReference>
<dbReference type="PANTHER" id="PTHR30341">
    <property type="entry name" value="SODIUM ION/PROTON ANTIPORTER NHAA-RELATED"/>
    <property type="match status" value="1"/>
</dbReference>
<dbReference type="Pfam" id="PF06965">
    <property type="entry name" value="Na_H_antiport_1"/>
    <property type="match status" value="1"/>
</dbReference>
<feature type="chain" id="PRO_0000334393" description="Na(+)/H(+) antiporter NhaA">
    <location>
        <begin position="1"/>
        <end position="440"/>
    </location>
</feature>
<feature type="transmembrane region" description="Helical" evidence="1">
    <location>
        <begin position="25"/>
        <end position="45"/>
    </location>
</feature>
<feature type="transmembrane region" description="Helical" evidence="1">
    <location>
        <begin position="76"/>
        <end position="96"/>
    </location>
</feature>
<feature type="transmembrane region" description="Helical" evidence="1">
    <location>
        <begin position="112"/>
        <end position="132"/>
    </location>
</feature>
<feature type="transmembrane region" description="Helical" evidence="1">
    <location>
        <begin position="141"/>
        <end position="161"/>
    </location>
</feature>
<feature type="transmembrane region" description="Helical" evidence="1">
    <location>
        <begin position="170"/>
        <end position="190"/>
    </location>
</feature>
<feature type="transmembrane region" description="Helical" evidence="1">
    <location>
        <begin position="194"/>
        <end position="214"/>
    </location>
</feature>
<feature type="transmembrane region" description="Helical" evidence="1">
    <location>
        <begin position="225"/>
        <end position="245"/>
    </location>
</feature>
<feature type="transmembrane region" description="Helical" evidence="1">
    <location>
        <begin position="312"/>
        <end position="332"/>
    </location>
</feature>
<feature type="transmembrane region" description="Helical" evidence="1">
    <location>
        <begin position="345"/>
        <end position="365"/>
    </location>
</feature>
<feature type="transmembrane region" description="Helical" evidence="1">
    <location>
        <begin position="378"/>
        <end position="398"/>
    </location>
</feature>
<feature type="transmembrane region" description="Helical" evidence="1">
    <location>
        <begin position="414"/>
        <end position="434"/>
    </location>
</feature>
<gene>
    <name evidence="1" type="primary">nhaA</name>
    <name type="ordered locus">RB3622</name>
</gene>
<keyword id="KW-0050">Antiport</keyword>
<keyword id="KW-0997">Cell inner membrane</keyword>
<keyword id="KW-1003">Cell membrane</keyword>
<keyword id="KW-0406">Ion transport</keyword>
<keyword id="KW-0472">Membrane</keyword>
<keyword id="KW-1185">Reference proteome</keyword>
<keyword id="KW-0915">Sodium</keyword>
<keyword id="KW-0739">Sodium transport</keyword>
<keyword id="KW-0812">Transmembrane</keyword>
<keyword id="KW-1133">Transmembrane helix</keyword>
<keyword id="KW-0813">Transport</keyword>
<accession>Q7UTY3</accession>
<reference key="1">
    <citation type="journal article" date="2003" name="Proc. Natl. Acad. Sci. U.S.A.">
        <title>Complete genome sequence of the marine planctomycete Pirellula sp. strain 1.</title>
        <authorList>
            <person name="Gloeckner F.O."/>
            <person name="Kube M."/>
            <person name="Bauer M."/>
            <person name="Teeling H."/>
            <person name="Lombardot T."/>
            <person name="Ludwig W."/>
            <person name="Gade D."/>
            <person name="Beck A."/>
            <person name="Borzym K."/>
            <person name="Heitmann K."/>
            <person name="Rabus R."/>
            <person name="Schlesner H."/>
            <person name="Amann R."/>
            <person name="Reinhardt R."/>
        </authorList>
    </citation>
    <scope>NUCLEOTIDE SEQUENCE [LARGE SCALE GENOMIC DNA]</scope>
    <source>
        <strain>DSM 10527 / NCIMB 13988 / SH1</strain>
    </source>
</reference>